<sequence length="139" mass="15447">MKKNTLLNAELSYIIASLGHTDEITICDAGLPIPDRSQRIDLALIQGIPTFIDTVKATLAEMQIEGVIVAQEFKTVSPQLHDELMTLVQIEEELRGKPITISYIPHEEFKSHSHQSKAIVRTGECTPYANVIFQSGVVF</sequence>
<keyword id="KW-0119">Carbohydrate metabolism</keyword>
<keyword id="KW-0963">Cytoplasm</keyword>
<keyword id="KW-0413">Isomerase</keyword>
<organism>
    <name type="scientific">Aliivibrio salmonicida (strain LFI1238)</name>
    <name type="common">Vibrio salmonicida (strain LFI1238)</name>
    <dbReference type="NCBI Taxonomy" id="316275"/>
    <lineage>
        <taxon>Bacteria</taxon>
        <taxon>Pseudomonadati</taxon>
        <taxon>Pseudomonadota</taxon>
        <taxon>Gammaproteobacteria</taxon>
        <taxon>Vibrionales</taxon>
        <taxon>Vibrionaceae</taxon>
        <taxon>Aliivibrio</taxon>
    </lineage>
</organism>
<accession>B6EKH2</accession>
<reference key="1">
    <citation type="journal article" date="2008" name="BMC Genomics">
        <title>The genome sequence of the fish pathogen Aliivibrio salmonicida strain LFI1238 shows extensive evidence of gene decay.</title>
        <authorList>
            <person name="Hjerde E."/>
            <person name="Lorentzen M.S."/>
            <person name="Holden M.T."/>
            <person name="Seeger K."/>
            <person name="Paulsen S."/>
            <person name="Bason N."/>
            <person name="Churcher C."/>
            <person name="Harris D."/>
            <person name="Norbertczak H."/>
            <person name="Quail M.A."/>
            <person name="Sanders S."/>
            <person name="Thurston S."/>
            <person name="Parkhill J."/>
            <person name="Willassen N.P."/>
            <person name="Thomson N.R."/>
        </authorList>
    </citation>
    <scope>NUCLEOTIDE SEQUENCE [LARGE SCALE GENOMIC DNA]</scope>
    <source>
        <strain>LFI1238</strain>
    </source>
</reference>
<feature type="chain" id="PRO_1000187127" description="D-ribose pyranase">
    <location>
        <begin position="1"/>
        <end position="139"/>
    </location>
</feature>
<feature type="active site" description="Proton donor" evidence="1">
    <location>
        <position position="20"/>
    </location>
</feature>
<feature type="binding site" evidence="1">
    <location>
        <position position="28"/>
    </location>
    <ligand>
        <name>substrate</name>
    </ligand>
</feature>
<feature type="binding site" evidence="1">
    <location>
        <position position="106"/>
    </location>
    <ligand>
        <name>substrate</name>
    </ligand>
</feature>
<feature type="binding site" evidence="1">
    <location>
        <begin position="128"/>
        <end position="130"/>
    </location>
    <ligand>
        <name>substrate</name>
    </ligand>
</feature>
<dbReference type="EC" id="5.4.99.62" evidence="1"/>
<dbReference type="EMBL" id="FM178379">
    <property type="protein sequence ID" value="CAQ79057.1"/>
    <property type="molecule type" value="Genomic_DNA"/>
</dbReference>
<dbReference type="RefSeq" id="WP_012550068.1">
    <property type="nucleotide sequence ID" value="NC_011312.1"/>
</dbReference>
<dbReference type="SMR" id="B6EKH2"/>
<dbReference type="KEGG" id="vsa:VSAL_I1372"/>
<dbReference type="eggNOG" id="COG1869">
    <property type="taxonomic scope" value="Bacteria"/>
</dbReference>
<dbReference type="HOGENOM" id="CLU_135498_0_0_6"/>
<dbReference type="UniPathway" id="UPA00916">
    <property type="reaction ID" value="UER00888"/>
</dbReference>
<dbReference type="Proteomes" id="UP000001730">
    <property type="component" value="Chromosome 1"/>
</dbReference>
<dbReference type="GO" id="GO:0005829">
    <property type="term" value="C:cytosol"/>
    <property type="evidence" value="ECO:0007669"/>
    <property type="project" value="TreeGrafter"/>
</dbReference>
<dbReference type="GO" id="GO:0062193">
    <property type="term" value="F:D-ribose pyranase activity"/>
    <property type="evidence" value="ECO:0007669"/>
    <property type="project" value="UniProtKB-EC"/>
</dbReference>
<dbReference type="GO" id="GO:0016872">
    <property type="term" value="F:intramolecular lyase activity"/>
    <property type="evidence" value="ECO:0007669"/>
    <property type="project" value="UniProtKB-UniRule"/>
</dbReference>
<dbReference type="GO" id="GO:0048029">
    <property type="term" value="F:monosaccharide binding"/>
    <property type="evidence" value="ECO:0007669"/>
    <property type="project" value="InterPro"/>
</dbReference>
<dbReference type="GO" id="GO:0019303">
    <property type="term" value="P:D-ribose catabolic process"/>
    <property type="evidence" value="ECO:0007669"/>
    <property type="project" value="UniProtKB-UniRule"/>
</dbReference>
<dbReference type="Gene3D" id="3.40.1650.10">
    <property type="entry name" value="RbsD-like domain"/>
    <property type="match status" value="1"/>
</dbReference>
<dbReference type="HAMAP" id="MF_01661">
    <property type="entry name" value="D_rib_pyranase"/>
    <property type="match status" value="1"/>
</dbReference>
<dbReference type="InterPro" id="IPR023064">
    <property type="entry name" value="D-ribose_pyranase"/>
</dbReference>
<dbReference type="InterPro" id="IPR023750">
    <property type="entry name" value="RbsD-like_sf"/>
</dbReference>
<dbReference type="InterPro" id="IPR007721">
    <property type="entry name" value="RbsD_FucU"/>
</dbReference>
<dbReference type="NCBIfam" id="NF008761">
    <property type="entry name" value="PRK11797.1"/>
    <property type="match status" value="1"/>
</dbReference>
<dbReference type="PANTHER" id="PTHR37831">
    <property type="entry name" value="D-RIBOSE PYRANASE"/>
    <property type="match status" value="1"/>
</dbReference>
<dbReference type="PANTHER" id="PTHR37831:SF1">
    <property type="entry name" value="D-RIBOSE PYRANASE"/>
    <property type="match status" value="1"/>
</dbReference>
<dbReference type="Pfam" id="PF05025">
    <property type="entry name" value="RbsD_FucU"/>
    <property type="match status" value="1"/>
</dbReference>
<dbReference type="SUPFAM" id="SSF102546">
    <property type="entry name" value="RbsD-like"/>
    <property type="match status" value="1"/>
</dbReference>
<comment type="function">
    <text evidence="1">Catalyzes the interconversion of beta-pyran and beta-furan forms of D-ribose.</text>
</comment>
<comment type="catalytic activity">
    <reaction evidence="1">
        <text>beta-D-ribopyranose = beta-D-ribofuranose</text>
        <dbReference type="Rhea" id="RHEA:25432"/>
        <dbReference type="ChEBI" id="CHEBI:27476"/>
        <dbReference type="ChEBI" id="CHEBI:47002"/>
        <dbReference type="EC" id="5.4.99.62"/>
    </reaction>
</comment>
<comment type="pathway">
    <text evidence="1">Carbohydrate metabolism; D-ribose degradation; D-ribose 5-phosphate from beta-D-ribopyranose: step 1/2.</text>
</comment>
<comment type="subunit">
    <text evidence="1">Homodecamer.</text>
</comment>
<comment type="subcellular location">
    <subcellularLocation>
        <location evidence="1">Cytoplasm</location>
    </subcellularLocation>
</comment>
<comment type="similarity">
    <text evidence="1">Belongs to the RbsD / FucU family. RbsD subfamily.</text>
</comment>
<evidence type="ECO:0000255" key="1">
    <source>
        <dbReference type="HAMAP-Rule" id="MF_01661"/>
    </source>
</evidence>
<protein>
    <recommendedName>
        <fullName evidence="1">D-ribose pyranase</fullName>
        <ecNumber evidence="1">5.4.99.62</ecNumber>
    </recommendedName>
</protein>
<gene>
    <name evidence="1" type="primary">rbsD</name>
    <name type="ordered locus">VSAL_I1372</name>
</gene>
<proteinExistence type="inferred from homology"/>
<name>RBSD_ALISL</name>